<protein>
    <recommendedName>
        <fullName evidence="1">Tryptophan synthase beta chain</fullName>
        <ecNumber evidence="1">4.2.1.20</ecNumber>
    </recommendedName>
</protein>
<keyword id="KW-0028">Amino-acid biosynthesis</keyword>
<keyword id="KW-0057">Aromatic amino acid biosynthesis</keyword>
<keyword id="KW-0456">Lyase</keyword>
<keyword id="KW-0663">Pyridoxal phosphate</keyword>
<keyword id="KW-1185">Reference proteome</keyword>
<keyword id="KW-0822">Tryptophan biosynthesis</keyword>
<dbReference type="EC" id="4.2.1.20" evidence="1"/>
<dbReference type="EMBL" id="CU468135">
    <property type="protein sequence ID" value="CAO96646.1"/>
    <property type="molecule type" value="Genomic_DNA"/>
</dbReference>
<dbReference type="RefSeq" id="WP_012441339.1">
    <property type="nucleotide sequence ID" value="NC_010694.1"/>
</dbReference>
<dbReference type="SMR" id="B2VKT2"/>
<dbReference type="STRING" id="465817.ETA_16000"/>
<dbReference type="KEGG" id="eta:ETA_16000"/>
<dbReference type="eggNOG" id="COG0133">
    <property type="taxonomic scope" value="Bacteria"/>
</dbReference>
<dbReference type="HOGENOM" id="CLU_016734_3_1_6"/>
<dbReference type="OrthoDB" id="9766131at2"/>
<dbReference type="UniPathway" id="UPA00035">
    <property type="reaction ID" value="UER00044"/>
</dbReference>
<dbReference type="Proteomes" id="UP000001726">
    <property type="component" value="Chromosome"/>
</dbReference>
<dbReference type="GO" id="GO:0005737">
    <property type="term" value="C:cytoplasm"/>
    <property type="evidence" value="ECO:0007669"/>
    <property type="project" value="TreeGrafter"/>
</dbReference>
<dbReference type="GO" id="GO:0004834">
    <property type="term" value="F:tryptophan synthase activity"/>
    <property type="evidence" value="ECO:0007669"/>
    <property type="project" value="UniProtKB-UniRule"/>
</dbReference>
<dbReference type="CDD" id="cd06446">
    <property type="entry name" value="Trp-synth_B"/>
    <property type="match status" value="1"/>
</dbReference>
<dbReference type="FunFam" id="3.40.50.1100:FF:000001">
    <property type="entry name" value="Tryptophan synthase beta chain"/>
    <property type="match status" value="1"/>
</dbReference>
<dbReference type="FunFam" id="3.40.50.1100:FF:000004">
    <property type="entry name" value="Tryptophan synthase beta chain"/>
    <property type="match status" value="1"/>
</dbReference>
<dbReference type="Gene3D" id="3.40.50.1100">
    <property type="match status" value="2"/>
</dbReference>
<dbReference type="HAMAP" id="MF_00133">
    <property type="entry name" value="Trp_synth_beta"/>
    <property type="match status" value="1"/>
</dbReference>
<dbReference type="InterPro" id="IPR006653">
    <property type="entry name" value="Trp_synth_b_CS"/>
</dbReference>
<dbReference type="InterPro" id="IPR006654">
    <property type="entry name" value="Trp_synth_beta"/>
</dbReference>
<dbReference type="InterPro" id="IPR023026">
    <property type="entry name" value="Trp_synth_beta/beta-like"/>
</dbReference>
<dbReference type="InterPro" id="IPR001926">
    <property type="entry name" value="TrpB-like_PALP"/>
</dbReference>
<dbReference type="InterPro" id="IPR036052">
    <property type="entry name" value="TrpB-like_PALP_sf"/>
</dbReference>
<dbReference type="NCBIfam" id="TIGR00263">
    <property type="entry name" value="trpB"/>
    <property type="match status" value="1"/>
</dbReference>
<dbReference type="PANTHER" id="PTHR48077:SF3">
    <property type="entry name" value="TRYPTOPHAN SYNTHASE"/>
    <property type="match status" value="1"/>
</dbReference>
<dbReference type="PANTHER" id="PTHR48077">
    <property type="entry name" value="TRYPTOPHAN SYNTHASE-RELATED"/>
    <property type="match status" value="1"/>
</dbReference>
<dbReference type="Pfam" id="PF00291">
    <property type="entry name" value="PALP"/>
    <property type="match status" value="1"/>
</dbReference>
<dbReference type="PIRSF" id="PIRSF001413">
    <property type="entry name" value="Trp_syn_beta"/>
    <property type="match status" value="1"/>
</dbReference>
<dbReference type="SUPFAM" id="SSF53686">
    <property type="entry name" value="Tryptophan synthase beta subunit-like PLP-dependent enzymes"/>
    <property type="match status" value="1"/>
</dbReference>
<dbReference type="PROSITE" id="PS00168">
    <property type="entry name" value="TRP_SYNTHASE_BETA"/>
    <property type="match status" value="1"/>
</dbReference>
<sequence>MTRLNPYFGEFGGMYVPQILMPALLQLEDAFISAQSDPAFQAEFTDLLKNYAGRPTALTRCLNLTKGSKTRLYLKREDLLHGGAHKTNQVLGQALLAKRMGKKEIIAETGAGQHGVASALACALLGLKCRIYMGAKDIERQSPNLFRMRLMGAEVIPVHSGSATLKDACNEALRDWSGSYETAHYMLGTAAGPHPFPTIVREFQRMIGEETKAQILQQEGRLPDAVIACVGGGSNAIGMFADFIDEPGVELIGVEPGGHGIESGEHGAPLKHGRVGIYFGMKSPMMQTADGQIEESYSISAGLDFPSVGPQHAHLNSIGRANYVSITDEEALDAFKALCRSEGIIPALESSHALAHALKMMREAPEKEQLLVVNLSGRGDKDIFTVHDILTAKGEI</sequence>
<organism>
    <name type="scientific">Erwinia tasmaniensis (strain DSM 17950 / CFBP 7177 / CIP 109463 / NCPPB 4357 / Et1/99)</name>
    <dbReference type="NCBI Taxonomy" id="465817"/>
    <lineage>
        <taxon>Bacteria</taxon>
        <taxon>Pseudomonadati</taxon>
        <taxon>Pseudomonadota</taxon>
        <taxon>Gammaproteobacteria</taxon>
        <taxon>Enterobacterales</taxon>
        <taxon>Erwiniaceae</taxon>
        <taxon>Erwinia</taxon>
    </lineage>
</organism>
<gene>
    <name evidence="1" type="primary">trpB</name>
    <name type="ordered locus">ETA_16000</name>
</gene>
<name>TRPB_ERWT9</name>
<feature type="chain" id="PRO_1000095788" description="Tryptophan synthase beta chain">
    <location>
        <begin position="1"/>
        <end position="396"/>
    </location>
</feature>
<feature type="modified residue" description="N6-(pyridoxal phosphate)lysine" evidence="1">
    <location>
        <position position="86"/>
    </location>
</feature>
<accession>B2VKT2</accession>
<evidence type="ECO:0000255" key="1">
    <source>
        <dbReference type="HAMAP-Rule" id="MF_00133"/>
    </source>
</evidence>
<reference key="1">
    <citation type="journal article" date="2008" name="Environ. Microbiol.">
        <title>The genome of Erwinia tasmaniensis strain Et1/99, a non-pathogenic bacterium in the genus Erwinia.</title>
        <authorList>
            <person name="Kube M."/>
            <person name="Migdoll A.M."/>
            <person name="Mueller I."/>
            <person name="Kuhl H."/>
            <person name="Beck A."/>
            <person name="Reinhardt R."/>
            <person name="Geider K."/>
        </authorList>
    </citation>
    <scope>NUCLEOTIDE SEQUENCE [LARGE SCALE GENOMIC DNA]</scope>
    <source>
        <strain>DSM 17950 / CFBP 7177 / CIP 109463 / NCPPB 4357 / Et1/99</strain>
    </source>
</reference>
<comment type="function">
    <text evidence="1">The beta subunit is responsible for the synthesis of L-tryptophan from indole and L-serine.</text>
</comment>
<comment type="catalytic activity">
    <reaction evidence="1">
        <text>(1S,2R)-1-C-(indol-3-yl)glycerol 3-phosphate + L-serine = D-glyceraldehyde 3-phosphate + L-tryptophan + H2O</text>
        <dbReference type="Rhea" id="RHEA:10532"/>
        <dbReference type="ChEBI" id="CHEBI:15377"/>
        <dbReference type="ChEBI" id="CHEBI:33384"/>
        <dbReference type="ChEBI" id="CHEBI:57912"/>
        <dbReference type="ChEBI" id="CHEBI:58866"/>
        <dbReference type="ChEBI" id="CHEBI:59776"/>
        <dbReference type="EC" id="4.2.1.20"/>
    </reaction>
</comment>
<comment type="cofactor">
    <cofactor evidence="1">
        <name>pyridoxal 5'-phosphate</name>
        <dbReference type="ChEBI" id="CHEBI:597326"/>
    </cofactor>
</comment>
<comment type="pathway">
    <text evidence="1">Amino-acid biosynthesis; L-tryptophan biosynthesis; L-tryptophan from chorismate: step 5/5.</text>
</comment>
<comment type="subunit">
    <text evidence="1">Tetramer of two alpha and two beta chains.</text>
</comment>
<comment type="similarity">
    <text evidence="1">Belongs to the TrpB family.</text>
</comment>
<proteinExistence type="inferred from homology"/>